<organism>
    <name type="scientific">Vigna unguiculata subsp. sesquipedalis</name>
    <name type="common">Yard-Long bean</name>
    <name type="synonym">Vigna sesquipedalis</name>
    <dbReference type="NCBI Taxonomy" id="138955"/>
    <lineage>
        <taxon>Eukaryota</taxon>
        <taxon>Viridiplantae</taxon>
        <taxon>Streptophyta</taxon>
        <taxon>Embryophyta</taxon>
        <taxon>Tracheophyta</taxon>
        <taxon>Spermatophyta</taxon>
        <taxon>Magnoliopsida</taxon>
        <taxon>eudicotyledons</taxon>
        <taxon>Gunneridae</taxon>
        <taxon>Pentapetalae</taxon>
        <taxon>rosids</taxon>
        <taxon>fabids</taxon>
        <taxon>Fabales</taxon>
        <taxon>Fabaceae</taxon>
        <taxon>Papilionoideae</taxon>
        <taxon>50 kb inversion clade</taxon>
        <taxon>NPAAA clade</taxon>
        <taxon>indigoferoid/millettioid clade</taxon>
        <taxon>Phaseoleae</taxon>
        <taxon>Vigna</taxon>
    </lineage>
</organism>
<reference evidence="3" key="1">
    <citation type="journal article" date="2005" name="Peptides">
        <title>Sesquin, a potent defensin-like antimicrobial peptide from ground beans with inhibitory activities toward tumor cells and HIV-1 reverse transcriptase.</title>
        <authorList>
            <person name="Wong J.H."/>
            <person name="Ng T.B."/>
        </authorList>
    </citation>
    <scope>PROTEIN SEQUENCE</scope>
    <scope>FUNCTION</scope>
    <source>
        <strain evidence="1">cv. Ground bean</strain>
        <tissue evidence="1">Seed</tissue>
    </source>
</reference>
<evidence type="ECO:0000269" key="1">
    <source>
    </source>
</evidence>
<evidence type="ECO:0000303" key="2">
    <source>
    </source>
</evidence>
<evidence type="ECO:0000305" key="3"/>
<name>DEF_VIGUS</name>
<sequence>KTCENLADTY</sequence>
<keyword id="KW-0044">Antibiotic</keyword>
<keyword id="KW-0929">Antimicrobial</keyword>
<keyword id="KW-0930">Antiviral protein</keyword>
<keyword id="KW-0903">Direct protein sequencing</keyword>
<keyword id="KW-0295">Fungicide</keyword>
<keyword id="KW-0497">Mitogen</keyword>
<keyword id="KW-0611">Plant defense</keyword>
<accession>P84868</accession>
<dbReference type="GO" id="GO:0050832">
    <property type="term" value="P:defense response to fungus"/>
    <property type="evidence" value="ECO:0000314"/>
    <property type="project" value="UniProtKB"/>
</dbReference>
<dbReference type="GO" id="GO:0050829">
    <property type="term" value="P:defense response to Gram-negative bacterium"/>
    <property type="evidence" value="ECO:0000314"/>
    <property type="project" value="UniProtKB"/>
</dbReference>
<dbReference type="GO" id="GO:0050830">
    <property type="term" value="P:defense response to Gram-positive bacterium"/>
    <property type="evidence" value="ECO:0000314"/>
    <property type="project" value="UniProtKB"/>
</dbReference>
<dbReference type="GO" id="GO:0031640">
    <property type="term" value="P:killing of cells of another organism"/>
    <property type="evidence" value="ECO:0007669"/>
    <property type="project" value="UniProtKB-KW"/>
</dbReference>
<dbReference type="GO" id="GO:0045787">
    <property type="term" value="P:positive regulation of cell cycle"/>
    <property type="evidence" value="ECO:0000314"/>
    <property type="project" value="UniProtKB"/>
</dbReference>
<dbReference type="GO" id="GO:0051781">
    <property type="term" value="P:positive regulation of cell division"/>
    <property type="evidence" value="ECO:0007669"/>
    <property type="project" value="UniProtKB-KW"/>
</dbReference>
<dbReference type="GO" id="GO:0050688">
    <property type="term" value="P:regulation of defense response to virus"/>
    <property type="evidence" value="ECO:0007669"/>
    <property type="project" value="UniProtKB-KW"/>
</dbReference>
<dbReference type="GO" id="GO:0009615">
    <property type="term" value="P:response to virus"/>
    <property type="evidence" value="ECO:0000314"/>
    <property type="project" value="UniProtKB"/>
</dbReference>
<comment type="function">
    <text evidence="1">Has antifungal activity against F.oxysporum, B.cinera and M.arachidicola with IC(50) values of 1.4 uM, 2.5 uM and 0.15 uM, respectively. Has antibacterial activity against the Gram-positive bacteria B.megaterium, B.subtilis and M.phlei, and the Gram-negative bacterium P.vulgaris. No antibacterial activity against the Gram-positive bacteria B.cereus and S.aureus, or the Gram-negative bacteria E.coli, E.aerogenes, P.aeruginosa and P.fluorescens. Has mitogenic activity towards murine splenocytes. Inhibits the proliferation of M1 leukemia and MCF-7 breast cancer cells in vitro. Inhibits human immunodeficiency virus-1 (HIV-1) reverse transcriptase.</text>
</comment>
<comment type="similarity">
    <text evidence="3">Belongs to the DEFL family.</text>
</comment>
<proteinExistence type="evidence at protein level"/>
<protein>
    <recommendedName>
        <fullName>Defensin-like protein</fullName>
    </recommendedName>
    <alternativeName>
        <fullName>Sesquin</fullName>
    </alternativeName>
</protein>
<feature type="peptide" id="PRO_0000244519" description="Defensin-like protein">
    <location>
        <begin position="1"/>
        <end position="10"/>
    </location>
</feature>
<feature type="non-terminal residue" evidence="2">
    <location>
        <position position="10"/>
    </location>
</feature>